<evidence type="ECO:0000255" key="1">
    <source>
        <dbReference type="HAMAP-Rule" id="MF_01328"/>
    </source>
</evidence>
<evidence type="ECO:0000256" key="2">
    <source>
        <dbReference type="SAM" id="MobiDB-lite"/>
    </source>
</evidence>
<evidence type="ECO:0000305" key="3"/>
<name>RL4_NOSP7</name>
<reference key="1">
    <citation type="journal article" date="2013" name="Plant Physiol.">
        <title>A Nostoc punctiforme Sugar Transporter Necessary to Establish a Cyanobacterium-Plant Symbiosis.</title>
        <authorList>
            <person name="Ekman M."/>
            <person name="Picossi S."/>
            <person name="Campbell E.L."/>
            <person name="Meeks J.C."/>
            <person name="Flores E."/>
        </authorList>
    </citation>
    <scope>NUCLEOTIDE SEQUENCE [LARGE SCALE GENOMIC DNA]</scope>
    <source>
        <strain>ATCC 29133 / PCC 73102</strain>
    </source>
</reference>
<organism>
    <name type="scientific">Nostoc punctiforme (strain ATCC 29133 / PCC 73102)</name>
    <dbReference type="NCBI Taxonomy" id="63737"/>
    <lineage>
        <taxon>Bacteria</taxon>
        <taxon>Bacillati</taxon>
        <taxon>Cyanobacteriota</taxon>
        <taxon>Cyanophyceae</taxon>
        <taxon>Nostocales</taxon>
        <taxon>Nostocaceae</taxon>
        <taxon>Nostoc</taxon>
    </lineage>
</organism>
<comment type="function">
    <text evidence="1">One of the primary rRNA binding proteins, this protein initially binds near the 5'-end of the 23S rRNA. It is important during the early stages of 50S assembly. It makes multiple contacts with different domains of the 23S rRNA in the assembled 50S subunit and ribosome.</text>
</comment>
<comment type="function">
    <text evidence="1">Forms part of the polypeptide exit tunnel.</text>
</comment>
<comment type="subunit">
    <text evidence="1">Part of the 50S ribosomal subunit.</text>
</comment>
<comment type="similarity">
    <text evidence="1">Belongs to the universal ribosomal protein uL4 family.</text>
</comment>
<protein>
    <recommendedName>
        <fullName evidence="1">Large ribosomal subunit protein uL4</fullName>
    </recommendedName>
    <alternativeName>
        <fullName evidence="3">50S ribosomal protein L4</fullName>
    </alternativeName>
</protein>
<feature type="chain" id="PRO_1000142161" description="Large ribosomal subunit protein uL4">
    <location>
        <begin position="1"/>
        <end position="212"/>
    </location>
</feature>
<feature type="region of interest" description="Disordered" evidence="2">
    <location>
        <begin position="45"/>
        <end position="71"/>
    </location>
</feature>
<feature type="compositionally biased region" description="Basic residues" evidence="2">
    <location>
        <begin position="60"/>
        <end position="71"/>
    </location>
</feature>
<accession>B2ITQ4</accession>
<keyword id="KW-1185">Reference proteome</keyword>
<keyword id="KW-0687">Ribonucleoprotein</keyword>
<keyword id="KW-0689">Ribosomal protein</keyword>
<keyword id="KW-0694">RNA-binding</keyword>
<keyword id="KW-0699">rRNA-binding</keyword>
<dbReference type="EMBL" id="CP001037">
    <property type="protein sequence ID" value="ACC82762.1"/>
    <property type="molecule type" value="Genomic_DNA"/>
</dbReference>
<dbReference type="RefSeq" id="WP_012410724.1">
    <property type="nucleotide sequence ID" value="NC_010628.1"/>
</dbReference>
<dbReference type="SMR" id="B2ITQ4"/>
<dbReference type="STRING" id="63737.Npun_R4389"/>
<dbReference type="EnsemblBacteria" id="ACC82762">
    <property type="protein sequence ID" value="ACC82762"/>
    <property type="gene ID" value="Npun_R4389"/>
</dbReference>
<dbReference type="KEGG" id="npu:Npun_R4389"/>
<dbReference type="eggNOG" id="COG0088">
    <property type="taxonomic scope" value="Bacteria"/>
</dbReference>
<dbReference type="HOGENOM" id="CLU_041575_5_2_3"/>
<dbReference type="OrthoDB" id="9803201at2"/>
<dbReference type="PhylomeDB" id="B2ITQ4"/>
<dbReference type="Proteomes" id="UP000001191">
    <property type="component" value="Chromosome"/>
</dbReference>
<dbReference type="GO" id="GO:1990904">
    <property type="term" value="C:ribonucleoprotein complex"/>
    <property type="evidence" value="ECO:0007669"/>
    <property type="project" value="UniProtKB-KW"/>
</dbReference>
<dbReference type="GO" id="GO:0005840">
    <property type="term" value="C:ribosome"/>
    <property type="evidence" value="ECO:0007669"/>
    <property type="project" value="UniProtKB-KW"/>
</dbReference>
<dbReference type="GO" id="GO:0019843">
    <property type="term" value="F:rRNA binding"/>
    <property type="evidence" value="ECO:0007669"/>
    <property type="project" value="UniProtKB-UniRule"/>
</dbReference>
<dbReference type="GO" id="GO:0003735">
    <property type="term" value="F:structural constituent of ribosome"/>
    <property type="evidence" value="ECO:0007669"/>
    <property type="project" value="InterPro"/>
</dbReference>
<dbReference type="GO" id="GO:0006412">
    <property type="term" value="P:translation"/>
    <property type="evidence" value="ECO:0007669"/>
    <property type="project" value="UniProtKB-UniRule"/>
</dbReference>
<dbReference type="Gene3D" id="3.40.1370.10">
    <property type="match status" value="1"/>
</dbReference>
<dbReference type="HAMAP" id="MF_01328_B">
    <property type="entry name" value="Ribosomal_uL4_B"/>
    <property type="match status" value="1"/>
</dbReference>
<dbReference type="InterPro" id="IPR002136">
    <property type="entry name" value="Ribosomal_uL4"/>
</dbReference>
<dbReference type="InterPro" id="IPR013005">
    <property type="entry name" value="Ribosomal_uL4-like"/>
</dbReference>
<dbReference type="InterPro" id="IPR023574">
    <property type="entry name" value="Ribosomal_uL4_dom_sf"/>
</dbReference>
<dbReference type="NCBIfam" id="TIGR03953">
    <property type="entry name" value="rplD_bact"/>
    <property type="match status" value="1"/>
</dbReference>
<dbReference type="PANTHER" id="PTHR10746">
    <property type="entry name" value="50S RIBOSOMAL PROTEIN L4"/>
    <property type="match status" value="1"/>
</dbReference>
<dbReference type="PANTHER" id="PTHR10746:SF17">
    <property type="entry name" value="LARGE RIBOSOMAL SUBUNIT PROTEIN UL4C"/>
    <property type="match status" value="1"/>
</dbReference>
<dbReference type="Pfam" id="PF00573">
    <property type="entry name" value="Ribosomal_L4"/>
    <property type="match status" value="1"/>
</dbReference>
<dbReference type="SUPFAM" id="SSF52166">
    <property type="entry name" value="Ribosomal protein L4"/>
    <property type="match status" value="1"/>
</dbReference>
<proteinExistence type="inferred from homology"/>
<sequence>MVESVVKNWQGEQVGETTFELRVAKEETASHIVHRALVRQLTNARQGNASTKTRAEVRGGGRKPWRQKGTGRARAGSIRSPLWRGGGVIFGPKPRDFDLKLNRKERRLALRTAFVGRIDDLIVVEEFSTELSRPKTKDLVAALARWGVVPESKALLILSEIADTDNVYLSARNIENLKLIAANQLNVFDLLHADKIVVTASALEKIQEVYSA</sequence>
<gene>
    <name evidence="1" type="primary">rplD</name>
    <name evidence="1" type="synonym">rpl4</name>
    <name type="ordered locus">Npun_R4389</name>
</gene>